<accession>Q8R3W7</accession>
<accession>A7NSI1</accession>
<accession>Q8BW95</accession>
<protein>
    <recommendedName>
        <fullName evidence="5">Anterior gradient protein 3</fullName>
    </recommendedName>
</protein>
<proteinExistence type="evidence at transcript level"/>
<keyword id="KW-0963">Cytoplasm</keyword>
<keyword id="KW-0256">Endoplasmic reticulum</keyword>
<keyword id="KW-1185">Reference proteome</keyword>
<keyword id="KW-0732">Signal</keyword>
<sequence length="165" mass="19081">MLHSALALCLLLITVSSNLAIAIKKEKRPPQTLSRGWGDDITWVQTYEEGLFHARKSNKPLMVIHHLEDCQYCQALKKEFAKNEEIQEMAQNDFIMLNLMHETTDKNLSPDGQYVPRIMFVDPSLTVRADITGRYSNRLYTYEPQDLPMLVDNMKKALRLIQSEL</sequence>
<feature type="signal peptide" evidence="2">
    <location>
        <begin position="1"/>
        <end position="20"/>
    </location>
</feature>
<feature type="chain" id="PRO_0000001041" description="Anterior gradient protein 3">
    <location>
        <begin position="21"/>
        <end position="165"/>
    </location>
</feature>
<feature type="short sequence motif" description="Prevents secretion from ER" evidence="4">
    <location>
        <begin position="162"/>
        <end position="165"/>
    </location>
</feature>
<feature type="sequence conflict" description="In Ref. 1; BAC35297." evidence="4" ref="1">
    <original>A</original>
    <variation>E</variation>
    <location>
        <position position="90"/>
    </location>
</feature>
<organism>
    <name type="scientific">Mus musculus</name>
    <name type="common">Mouse</name>
    <dbReference type="NCBI Taxonomy" id="10090"/>
    <lineage>
        <taxon>Eukaryota</taxon>
        <taxon>Metazoa</taxon>
        <taxon>Chordata</taxon>
        <taxon>Craniata</taxon>
        <taxon>Vertebrata</taxon>
        <taxon>Euteleostomi</taxon>
        <taxon>Mammalia</taxon>
        <taxon>Eutheria</taxon>
        <taxon>Euarchontoglires</taxon>
        <taxon>Glires</taxon>
        <taxon>Rodentia</taxon>
        <taxon>Myomorpha</taxon>
        <taxon>Muroidea</taxon>
        <taxon>Muridae</taxon>
        <taxon>Murinae</taxon>
        <taxon>Mus</taxon>
        <taxon>Mus</taxon>
    </lineage>
</organism>
<reference key="1">
    <citation type="journal article" date="2005" name="Science">
        <title>The transcriptional landscape of the mammalian genome.</title>
        <authorList>
            <person name="Carninci P."/>
            <person name="Kasukawa T."/>
            <person name="Katayama S."/>
            <person name="Gough J."/>
            <person name="Frith M.C."/>
            <person name="Maeda N."/>
            <person name="Oyama R."/>
            <person name="Ravasi T."/>
            <person name="Lenhard B."/>
            <person name="Wells C."/>
            <person name="Kodzius R."/>
            <person name="Shimokawa K."/>
            <person name="Bajic V.B."/>
            <person name="Brenner S.E."/>
            <person name="Batalov S."/>
            <person name="Forrest A.R."/>
            <person name="Zavolan M."/>
            <person name="Davis M.J."/>
            <person name="Wilming L.G."/>
            <person name="Aidinis V."/>
            <person name="Allen J.E."/>
            <person name="Ambesi-Impiombato A."/>
            <person name="Apweiler R."/>
            <person name="Aturaliya R.N."/>
            <person name="Bailey T.L."/>
            <person name="Bansal M."/>
            <person name="Baxter L."/>
            <person name="Beisel K.W."/>
            <person name="Bersano T."/>
            <person name="Bono H."/>
            <person name="Chalk A.M."/>
            <person name="Chiu K.P."/>
            <person name="Choudhary V."/>
            <person name="Christoffels A."/>
            <person name="Clutterbuck D.R."/>
            <person name="Crowe M.L."/>
            <person name="Dalla E."/>
            <person name="Dalrymple B.P."/>
            <person name="de Bono B."/>
            <person name="Della Gatta G."/>
            <person name="di Bernardo D."/>
            <person name="Down T."/>
            <person name="Engstrom P."/>
            <person name="Fagiolini M."/>
            <person name="Faulkner G."/>
            <person name="Fletcher C.F."/>
            <person name="Fukushima T."/>
            <person name="Furuno M."/>
            <person name="Futaki S."/>
            <person name="Gariboldi M."/>
            <person name="Georgii-Hemming P."/>
            <person name="Gingeras T.R."/>
            <person name="Gojobori T."/>
            <person name="Green R.E."/>
            <person name="Gustincich S."/>
            <person name="Harbers M."/>
            <person name="Hayashi Y."/>
            <person name="Hensch T.K."/>
            <person name="Hirokawa N."/>
            <person name="Hill D."/>
            <person name="Huminiecki L."/>
            <person name="Iacono M."/>
            <person name="Ikeo K."/>
            <person name="Iwama A."/>
            <person name="Ishikawa T."/>
            <person name="Jakt M."/>
            <person name="Kanapin A."/>
            <person name="Katoh M."/>
            <person name="Kawasawa Y."/>
            <person name="Kelso J."/>
            <person name="Kitamura H."/>
            <person name="Kitano H."/>
            <person name="Kollias G."/>
            <person name="Krishnan S.P."/>
            <person name="Kruger A."/>
            <person name="Kummerfeld S.K."/>
            <person name="Kurochkin I.V."/>
            <person name="Lareau L.F."/>
            <person name="Lazarevic D."/>
            <person name="Lipovich L."/>
            <person name="Liu J."/>
            <person name="Liuni S."/>
            <person name="McWilliam S."/>
            <person name="Madan Babu M."/>
            <person name="Madera M."/>
            <person name="Marchionni L."/>
            <person name="Matsuda H."/>
            <person name="Matsuzawa S."/>
            <person name="Miki H."/>
            <person name="Mignone F."/>
            <person name="Miyake S."/>
            <person name="Morris K."/>
            <person name="Mottagui-Tabar S."/>
            <person name="Mulder N."/>
            <person name="Nakano N."/>
            <person name="Nakauchi H."/>
            <person name="Ng P."/>
            <person name="Nilsson R."/>
            <person name="Nishiguchi S."/>
            <person name="Nishikawa S."/>
            <person name="Nori F."/>
            <person name="Ohara O."/>
            <person name="Okazaki Y."/>
            <person name="Orlando V."/>
            <person name="Pang K.C."/>
            <person name="Pavan W.J."/>
            <person name="Pavesi G."/>
            <person name="Pesole G."/>
            <person name="Petrovsky N."/>
            <person name="Piazza S."/>
            <person name="Reed J."/>
            <person name="Reid J.F."/>
            <person name="Ring B.Z."/>
            <person name="Ringwald M."/>
            <person name="Rost B."/>
            <person name="Ruan Y."/>
            <person name="Salzberg S.L."/>
            <person name="Sandelin A."/>
            <person name="Schneider C."/>
            <person name="Schoenbach C."/>
            <person name="Sekiguchi K."/>
            <person name="Semple C.A."/>
            <person name="Seno S."/>
            <person name="Sessa L."/>
            <person name="Sheng Y."/>
            <person name="Shibata Y."/>
            <person name="Shimada H."/>
            <person name="Shimada K."/>
            <person name="Silva D."/>
            <person name="Sinclair B."/>
            <person name="Sperling S."/>
            <person name="Stupka E."/>
            <person name="Sugiura K."/>
            <person name="Sultana R."/>
            <person name="Takenaka Y."/>
            <person name="Taki K."/>
            <person name="Tammoja K."/>
            <person name="Tan S.L."/>
            <person name="Tang S."/>
            <person name="Taylor M.S."/>
            <person name="Tegner J."/>
            <person name="Teichmann S.A."/>
            <person name="Ueda H.R."/>
            <person name="van Nimwegen E."/>
            <person name="Verardo R."/>
            <person name="Wei C.L."/>
            <person name="Yagi K."/>
            <person name="Yamanishi H."/>
            <person name="Zabarovsky E."/>
            <person name="Zhu S."/>
            <person name="Zimmer A."/>
            <person name="Hide W."/>
            <person name="Bult C."/>
            <person name="Grimmond S.M."/>
            <person name="Teasdale R.D."/>
            <person name="Liu E.T."/>
            <person name="Brusic V."/>
            <person name="Quackenbush J."/>
            <person name="Wahlestedt C."/>
            <person name="Mattick J.S."/>
            <person name="Hume D.A."/>
            <person name="Kai C."/>
            <person name="Sasaki D."/>
            <person name="Tomaru Y."/>
            <person name="Fukuda S."/>
            <person name="Kanamori-Katayama M."/>
            <person name="Suzuki M."/>
            <person name="Aoki J."/>
            <person name="Arakawa T."/>
            <person name="Iida J."/>
            <person name="Imamura K."/>
            <person name="Itoh M."/>
            <person name="Kato T."/>
            <person name="Kawaji H."/>
            <person name="Kawagashira N."/>
            <person name="Kawashima T."/>
            <person name="Kojima M."/>
            <person name="Kondo S."/>
            <person name="Konno H."/>
            <person name="Nakano K."/>
            <person name="Ninomiya N."/>
            <person name="Nishio T."/>
            <person name="Okada M."/>
            <person name="Plessy C."/>
            <person name="Shibata K."/>
            <person name="Shiraki T."/>
            <person name="Suzuki S."/>
            <person name="Tagami M."/>
            <person name="Waki K."/>
            <person name="Watahiki A."/>
            <person name="Okamura-Oho Y."/>
            <person name="Suzuki H."/>
            <person name="Kawai J."/>
            <person name="Hayashizaki Y."/>
        </authorList>
    </citation>
    <scope>NUCLEOTIDE SEQUENCE [LARGE SCALE MRNA]</scope>
    <source>
        <strain>C57BL/6J</strain>
        <tissue>Lung</tissue>
    </source>
</reference>
<reference key="2">
    <citation type="journal article" date="2009" name="PLoS Biol.">
        <title>Lineage-specific biology revealed by a finished genome assembly of the mouse.</title>
        <authorList>
            <person name="Church D.M."/>
            <person name="Goodstadt L."/>
            <person name="Hillier L.W."/>
            <person name="Zody M.C."/>
            <person name="Goldstein S."/>
            <person name="She X."/>
            <person name="Bult C.J."/>
            <person name="Agarwala R."/>
            <person name="Cherry J.L."/>
            <person name="DiCuccio M."/>
            <person name="Hlavina W."/>
            <person name="Kapustin Y."/>
            <person name="Meric P."/>
            <person name="Maglott D."/>
            <person name="Birtle Z."/>
            <person name="Marques A.C."/>
            <person name="Graves T."/>
            <person name="Zhou S."/>
            <person name="Teague B."/>
            <person name="Potamousis K."/>
            <person name="Churas C."/>
            <person name="Place M."/>
            <person name="Herschleb J."/>
            <person name="Runnheim R."/>
            <person name="Forrest D."/>
            <person name="Amos-Landgraf J."/>
            <person name="Schwartz D.C."/>
            <person name="Cheng Z."/>
            <person name="Lindblad-Toh K."/>
            <person name="Eichler E.E."/>
            <person name="Ponting C.P."/>
        </authorList>
    </citation>
    <scope>NUCLEOTIDE SEQUENCE [LARGE SCALE GENOMIC DNA]</scope>
    <source>
        <strain>C57BL/6J</strain>
    </source>
</reference>
<reference key="3">
    <citation type="journal article" date="2004" name="Genome Res.">
        <title>The status, quality, and expansion of the NIH full-length cDNA project: the Mammalian Gene Collection (MGC).</title>
        <authorList>
            <consortium name="The MGC Project Team"/>
        </authorList>
    </citation>
    <scope>NUCLEOTIDE SEQUENCE [LARGE SCALE MRNA]</scope>
    <source>
        <strain>FVB/N-3</strain>
        <tissue>Mammary tumor</tissue>
    </source>
</reference>
<reference key="4">
    <citation type="journal article" date="2015" name="Am. J. Respir. Cell Mol. Biol.">
        <title>The ER resident protein AGR3 is required for regulation of ciliary beat frequency in the airway.</title>
        <authorList>
            <person name="Bonser L.R."/>
            <person name="Schroeder B.W."/>
            <person name="Ostrin L.A."/>
            <person name="Baumlin N."/>
            <person name="Olson J.L."/>
            <person name="Salathe M."/>
            <person name="Erle D.J."/>
        </authorList>
    </citation>
    <scope>DISRUPTION PHENOTYPE</scope>
    <scope>TISSUE SPECIFICITY</scope>
    <scope>FUNCTION</scope>
</reference>
<name>AGR3_MOUSE</name>
<gene>
    <name evidence="5" type="primary">Agr3</name>
</gene>
<dbReference type="EMBL" id="AK053177">
    <property type="protein sequence ID" value="BAC35297.1"/>
    <property type="molecule type" value="mRNA"/>
</dbReference>
<dbReference type="EMBL" id="CT030196">
    <property type="status" value="NOT_ANNOTATED_CDS"/>
    <property type="molecule type" value="Genomic_DNA"/>
</dbReference>
<dbReference type="EMBL" id="BC023499">
    <property type="protein sequence ID" value="AAH23499.1"/>
    <property type="molecule type" value="mRNA"/>
</dbReference>
<dbReference type="CCDS" id="CCDS25880.1"/>
<dbReference type="RefSeq" id="NP_997414.2">
    <property type="nucleotide sequence ID" value="NM_207531.3"/>
</dbReference>
<dbReference type="SMR" id="Q8R3W7"/>
<dbReference type="FunCoup" id="Q8R3W7">
    <property type="interactions" value="196"/>
</dbReference>
<dbReference type="STRING" id="10090.ENSMUSP00000049212"/>
<dbReference type="iPTMnet" id="Q8R3W7"/>
<dbReference type="PhosphoSitePlus" id="Q8R3W7"/>
<dbReference type="PaxDb" id="10090-ENSMUSP00000049212"/>
<dbReference type="PeptideAtlas" id="Q8R3W7"/>
<dbReference type="ProteomicsDB" id="285771"/>
<dbReference type="Antibodypedia" id="25286">
    <property type="antibodies" value="285 antibodies from 33 providers"/>
</dbReference>
<dbReference type="DNASU" id="403205"/>
<dbReference type="Ensembl" id="ENSMUST00000042101.5">
    <property type="protein sequence ID" value="ENSMUSP00000049212.5"/>
    <property type="gene ID" value="ENSMUSG00000036231.6"/>
</dbReference>
<dbReference type="GeneID" id="403205"/>
<dbReference type="KEGG" id="mmu:403205"/>
<dbReference type="UCSC" id="uc007njl.2">
    <property type="organism name" value="mouse"/>
</dbReference>
<dbReference type="AGR" id="MGI:2685734"/>
<dbReference type="CTD" id="155465"/>
<dbReference type="MGI" id="MGI:2685734">
    <property type="gene designation" value="Agr3"/>
</dbReference>
<dbReference type="VEuPathDB" id="HostDB:ENSMUSG00000036231"/>
<dbReference type="eggNOG" id="ENOG502R72A">
    <property type="taxonomic scope" value="Eukaryota"/>
</dbReference>
<dbReference type="GeneTree" id="ENSGT00530000063273"/>
<dbReference type="HOGENOM" id="CLU_088048_1_0_1"/>
<dbReference type="InParanoid" id="Q8R3W7"/>
<dbReference type="OMA" id="PILIENM"/>
<dbReference type="OrthoDB" id="262308at2759"/>
<dbReference type="PhylomeDB" id="Q8R3W7"/>
<dbReference type="TreeFam" id="TF321449"/>
<dbReference type="BioGRID-ORCS" id="403205">
    <property type="hits" value="2 hits in 75 CRISPR screens"/>
</dbReference>
<dbReference type="ChiTaRS" id="Agr3">
    <property type="organism name" value="mouse"/>
</dbReference>
<dbReference type="PRO" id="PR:Q8R3W7"/>
<dbReference type="Proteomes" id="UP000000589">
    <property type="component" value="Chromosome 12"/>
</dbReference>
<dbReference type="RNAct" id="Q8R3W7">
    <property type="molecule type" value="protein"/>
</dbReference>
<dbReference type="Bgee" id="ENSMUSG00000036231">
    <property type="expression patterns" value="Expressed in saccule of membranous labyrinth and 46 other cell types or tissues"/>
</dbReference>
<dbReference type="ExpressionAtlas" id="Q8R3W7">
    <property type="expression patterns" value="baseline and differential"/>
</dbReference>
<dbReference type="GO" id="GO:0005783">
    <property type="term" value="C:endoplasmic reticulum"/>
    <property type="evidence" value="ECO:0007669"/>
    <property type="project" value="UniProtKB-SubCell"/>
</dbReference>
<dbReference type="GO" id="GO:0002162">
    <property type="term" value="F:dystroglycan binding"/>
    <property type="evidence" value="ECO:0007669"/>
    <property type="project" value="Ensembl"/>
</dbReference>
<dbReference type="CDD" id="cd02960">
    <property type="entry name" value="AGR"/>
    <property type="match status" value="1"/>
</dbReference>
<dbReference type="FunFam" id="3.40.30.10:FF:000036">
    <property type="entry name" value="anterior gradient protein 2 homolog"/>
    <property type="match status" value="1"/>
</dbReference>
<dbReference type="Gene3D" id="3.40.30.10">
    <property type="entry name" value="Glutaredoxin"/>
    <property type="match status" value="1"/>
</dbReference>
<dbReference type="InterPro" id="IPR051099">
    <property type="entry name" value="AGR/TXD"/>
</dbReference>
<dbReference type="InterPro" id="IPR036249">
    <property type="entry name" value="Thioredoxin-like_sf"/>
</dbReference>
<dbReference type="PANTHER" id="PTHR15337:SF5">
    <property type="entry name" value="ANTERIOR GRADIENT PROTEIN 3"/>
    <property type="match status" value="1"/>
</dbReference>
<dbReference type="PANTHER" id="PTHR15337">
    <property type="entry name" value="ANTERIOR GRADIENT PROTEIN-RELATED"/>
    <property type="match status" value="1"/>
</dbReference>
<dbReference type="Pfam" id="PF13899">
    <property type="entry name" value="Thioredoxin_7"/>
    <property type="match status" value="1"/>
</dbReference>
<dbReference type="SUPFAM" id="SSF52833">
    <property type="entry name" value="Thioredoxin-like"/>
    <property type="match status" value="1"/>
</dbReference>
<evidence type="ECO:0000250" key="1">
    <source>
        <dbReference type="UniProtKB" id="Q8TD06"/>
    </source>
</evidence>
<evidence type="ECO:0000255" key="2"/>
<evidence type="ECO:0000269" key="3">
    <source>
    </source>
</evidence>
<evidence type="ECO:0000305" key="4"/>
<evidence type="ECO:0000312" key="5">
    <source>
        <dbReference type="MGI" id="MGI:2685734"/>
    </source>
</evidence>
<comment type="function">
    <text evidence="3">Required for calcium-mediated regulation of ciliary beat frequency and mucociliary clearance in the airway. Might be involved in the regulation of intracellular calcium in tracheal epithelial cells.</text>
</comment>
<comment type="subunit">
    <text evidence="1">Interacts with LYPD3 and DAG1 (alphaDAG1).</text>
</comment>
<comment type="subcellular location">
    <subcellularLocation>
        <location evidence="1">Endoplasmic reticulum</location>
    </subcellularLocation>
    <subcellularLocation>
        <location evidence="1">Cytoplasm</location>
    </subcellularLocation>
</comment>
<comment type="tissue specificity">
    <text evidence="3">Expressed in the ciliated cells of the airway epithelium. Not detected in the mucous cells.</text>
</comment>
<comment type="disruption phenotype">
    <text evidence="3">Knockout mice develop ciliated cells with normal-appearing cilia and histology. However, ciliary beat frequency was lower in airways from knockout mice compared with control mice in presence of calcium (20% lower in the absence of stimulation, 35% lower after ATP stimulation). Knockout mice show reduced mucociliary clearance. Knockout mice do not seem to show endoplasmic reticulum stress response.</text>
</comment>
<comment type="similarity">
    <text evidence="4">Belongs to the AGR family.</text>
</comment>